<feature type="chain" id="PRO_0000127924" description="Uncharacterized protein AF_0773">
    <location>
        <begin position="1"/>
        <end position="62"/>
    </location>
</feature>
<accession>O29485</accession>
<gene>
    <name type="ordered locus">AF_0773</name>
</gene>
<name>Y773_ARCFU</name>
<protein>
    <recommendedName>
        <fullName>Uncharacterized protein AF_0773</fullName>
    </recommendedName>
</protein>
<organism>
    <name type="scientific">Archaeoglobus fulgidus (strain ATCC 49558 / DSM 4304 / JCM 9628 / NBRC 100126 / VC-16)</name>
    <dbReference type="NCBI Taxonomy" id="224325"/>
    <lineage>
        <taxon>Archaea</taxon>
        <taxon>Methanobacteriati</taxon>
        <taxon>Methanobacteriota</taxon>
        <taxon>Archaeoglobi</taxon>
        <taxon>Archaeoglobales</taxon>
        <taxon>Archaeoglobaceae</taxon>
        <taxon>Archaeoglobus</taxon>
    </lineage>
</organism>
<proteinExistence type="predicted"/>
<keyword id="KW-1185">Reference proteome</keyword>
<dbReference type="EMBL" id="AE000782">
    <property type="protein sequence ID" value="AAB90478.1"/>
    <property type="molecule type" value="Genomic_DNA"/>
</dbReference>
<dbReference type="PIR" id="E69346">
    <property type="entry name" value="E69346"/>
</dbReference>
<dbReference type="RefSeq" id="WP_010878276.1">
    <property type="nucleotide sequence ID" value="NC_000917.1"/>
</dbReference>
<dbReference type="STRING" id="224325.AF_0773"/>
<dbReference type="PaxDb" id="224325-AF_0773"/>
<dbReference type="EnsemblBacteria" id="AAB90478">
    <property type="protein sequence ID" value="AAB90478"/>
    <property type="gene ID" value="AF_0773"/>
</dbReference>
<dbReference type="GeneID" id="1483990"/>
<dbReference type="KEGG" id="afu:AF_0773"/>
<dbReference type="eggNOG" id="arCOG10223">
    <property type="taxonomic scope" value="Archaea"/>
</dbReference>
<dbReference type="HOGENOM" id="CLU_2893017_0_0_2"/>
<dbReference type="Proteomes" id="UP000002199">
    <property type="component" value="Chromosome"/>
</dbReference>
<sequence>MIEFAYSLKNDPKKAFDEIRSKAENLDFRPNLAIVYLTEHLQKDAKVFKFDFDTLWCLLKGL</sequence>
<reference key="1">
    <citation type="journal article" date="1997" name="Nature">
        <title>The complete genome sequence of the hyperthermophilic, sulphate-reducing archaeon Archaeoglobus fulgidus.</title>
        <authorList>
            <person name="Klenk H.-P."/>
            <person name="Clayton R.A."/>
            <person name="Tomb J.-F."/>
            <person name="White O."/>
            <person name="Nelson K.E."/>
            <person name="Ketchum K.A."/>
            <person name="Dodson R.J."/>
            <person name="Gwinn M.L."/>
            <person name="Hickey E.K."/>
            <person name="Peterson J.D."/>
            <person name="Richardson D.L."/>
            <person name="Kerlavage A.R."/>
            <person name="Graham D.E."/>
            <person name="Kyrpides N.C."/>
            <person name="Fleischmann R.D."/>
            <person name="Quackenbush J."/>
            <person name="Lee N.H."/>
            <person name="Sutton G.G."/>
            <person name="Gill S.R."/>
            <person name="Kirkness E.F."/>
            <person name="Dougherty B.A."/>
            <person name="McKenney K."/>
            <person name="Adams M.D."/>
            <person name="Loftus B.J."/>
            <person name="Peterson S.N."/>
            <person name="Reich C.I."/>
            <person name="McNeil L.K."/>
            <person name="Badger J.H."/>
            <person name="Glodek A."/>
            <person name="Zhou L."/>
            <person name="Overbeek R."/>
            <person name="Gocayne J.D."/>
            <person name="Weidman J.F."/>
            <person name="McDonald L.A."/>
            <person name="Utterback T.R."/>
            <person name="Cotton M.D."/>
            <person name="Spriggs T."/>
            <person name="Artiach P."/>
            <person name="Kaine B.P."/>
            <person name="Sykes S.M."/>
            <person name="Sadow P.W."/>
            <person name="D'Andrea K.P."/>
            <person name="Bowman C."/>
            <person name="Fujii C."/>
            <person name="Garland S.A."/>
            <person name="Mason T.M."/>
            <person name="Olsen G.J."/>
            <person name="Fraser C.M."/>
            <person name="Smith H.O."/>
            <person name="Woese C.R."/>
            <person name="Venter J.C."/>
        </authorList>
    </citation>
    <scope>NUCLEOTIDE SEQUENCE [LARGE SCALE GENOMIC DNA]</scope>
    <source>
        <strain>ATCC 49558 / DSM 4304 / JCM 9628 / NBRC 100126 / VC-16</strain>
    </source>
</reference>